<gene>
    <name evidence="1" type="primary">araA</name>
    <name type="ordered locus">EcSMS35_0064</name>
</gene>
<sequence length="500" mass="56103">MTIFDNYEVWFVIGSQHLYGPETLRQVTQHAEHVVNALNTEAKLPCKLVLKPLGTTPDEITAICRDANYDDRCAGLVVWLHTFSPAKMWINGLTMLNKPLLQFHTQFNAALPWDSIDMDFMNLNQTAHGGREFGFIGARMRQQHAVVTGHWQDKQAHERIGSWMRQAVSKQDTRHLKVCRFGDNMREVAVTDGDKVAAQIKFGFSVNTWAVGDLVQVVNSISDGDVNALVDEYESCYTMTPATQIHGEKRQNVLEAARIELGMKRFLEQGGFHAFTTTFEDLHGLKQLPGLAVQRLMQQGYGFAGEGDWKTAALLRIMKVMSTGLQGGTSFMEDYTYHFEKGNDLVLGSHMLEVCPSIAVEEKPILDVQHLGIGGKDDPARLIFNTQTGPAIVASLIDLGDRYRLLVNCIDTVKTPHSLPKLPVANALWKAQPDLPTASEAWILAGGAHHTVFSHALNLNDMRQFAEMHDIEITVIDNDTRLPAFKDALRWNEVYYGFRR</sequence>
<organism>
    <name type="scientific">Escherichia coli (strain SMS-3-5 / SECEC)</name>
    <dbReference type="NCBI Taxonomy" id="439855"/>
    <lineage>
        <taxon>Bacteria</taxon>
        <taxon>Pseudomonadati</taxon>
        <taxon>Pseudomonadota</taxon>
        <taxon>Gammaproteobacteria</taxon>
        <taxon>Enterobacterales</taxon>
        <taxon>Enterobacteriaceae</taxon>
        <taxon>Escherichia</taxon>
    </lineage>
</organism>
<comment type="function">
    <text evidence="1">Catalyzes the conversion of L-arabinose to L-ribulose.</text>
</comment>
<comment type="catalytic activity">
    <reaction evidence="1">
        <text>beta-L-arabinopyranose = L-ribulose</text>
        <dbReference type="Rhea" id="RHEA:14821"/>
        <dbReference type="ChEBI" id="CHEBI:16880"/>
        <dbReference type="ChEBI" id="CHEBI:40886"/>
        <dbReference type="EC" id="5.3.1.4"/>
    </reaction>
</comment>
<comment type="cofactor">
    <cofactor evidence="1">
        <name>Mn(2+)</name>
        <dbReference type="ChEBI" id="CHEBI:29035"/>
    </cofactor>
    <text evidence="1">Binds 1 Mn(2+) ion per subunit.</text>
</comment>
<comment type="pathway">
    <text evidence="1">Carbohydrate degradation; L-arabinose degradation via L-ribulose; D-xylulose 5-phosphate from L-arabinose (bacterial route): step 1/3.</text>
</comment>
<comment type="subunit">
    <text evidence="1">Homohexamer.</text>
</comment>
<comment type="similarity">
    <text evidence="1">Belongs to the arabinose isomerase family.</text>
</comment>
<proteinExistence type="inferred from homology"/>
<keyword id="KW-0054">Arabinose catabolism</keyword>
<keyword id="KW-0119">Carbohydrate metabolism</keyword>
<keyword id="KW-0413">Isomerase</keyword>
<keyword id="KW-0464">Manganese</keyword>
<keyword id="KW-0479">Metal-binding</keyword>
<evidence type="ECO:0000255" key="1">
    <source>
        <dbReference type="HAMAP-Rule" id="MF_00519"/>
    </source>
</evidence>
<accession>B1LFZ6</accession>
<dbReference type="EC" id="5.3.1.4" evidence="1"/>
<dbReference type="EMBL" id="CP000970">
    <property type="protein sequence ID" value="ACB18687.1"/>
    <property type="molecule type" value="Genomic_DNA"/>
</dbReference>
<dbReference type="RefSeq" id="WP_000151734.1">
    <property type="nucleotide sequence ID" value="NC_010498.1"/>
</dbReference>
<dbReference type="SMR" id="B1LFZ6"/>
<dbReference type="GeneID" id="93777375"/>
<dbReference type="KEGG" id="ecm:EcSMS35_0064"/>
<dbReference type="HOGENOM" id="CLU_045663_0_0_6"/>
<dbReference type="UniPathway" id="UPA00145">
    <property type="reaction ID" value="UER00565"/>
</dbReference>
<dbReference type="Proteomes" id="UP000007011">
    <property type="component" value="Chromosome"/>
</dbReference>
<dbReference type="GO" id="GO:0005829">
    <property type="term" value="C:cytosol"/>
    <property type="evidence" value="ECO:0007669"/>
    <property type="project" value="TreeGrafter"/>
</dbReference>
<dbReference type="GO" id="GO:0008733">
    <property type="term" value="F:L-arabinose isomerase activity"/>
    <property type="evidence" value="ECO:0007669"/>
    <property type="project" value="UniProtKB-UniRule"/>
</dbReference>
<dbReference type="GO" id="GO:0030145">
    <property type="term" value="F:manganese ion binding"/>
    <property type="evidence" value="ECO:0007669"/>
    <property type="project" value="UniProtKB-UniRule"/>
</dbReference>
<dbReference type="GO" id="GO:0019569">
    <property type="term" value="P:L-arabinose catabolic process to xylulose 5-phosphate"/>
    <property type="evidence" value="ECO:0007669"/>
    <property type="project" value="UniProtKB-UniRule"/>
</dbReference>
<dbReference type="CDD" id="cd03557">
    <property type="entry name" value="L-arabinose_isomerase"/>
    <property type="match status" value="1"/>
</dbReference>
<dbReference type="FunFam" id="3.40.50.10940:FF:000001">
    <property type="entry name" value="L-arabinose isomerase"/>
    <property type="match status" value="1"/>
</dbReference>
<dbReference type="Gene3D" id="3.40.50.10940">
    <property type="match status" value="1"/>
</dbReference>
<dbReference type="HAMAP" id="MF_00519">
    <property type="entry name" value="Arabinose_Isome"/>
    <property type="match status" value="1"/>
</dbReference>
<dbReference type="InterPro" id="IPR024664">
    <property type="entry name" value="Ara_Isoase_C"/>
</dbReference>
<dbReference type="InterPro" id="IPR055390">
    <property type="entry name" value="AraA_central"/>
</dbReference>
<dbReference type="InterPro" id="IPR055389">
    <property type="entry name" value="AraA_N"/>
</dbReference>
<dbReference type="InterPro" id="IPR038583">
    <property type="entry name" value="AraA_N_sf"/>
</dbReference>
<dbReference type="InterPro" id="IPR004216">
    <property type="entry name" value="Fuc/Ara_isomerase_C"/>
</dbReference>
<dbReference type="InterPro" id="IPR009015">
    <property type="entry name" value="Fucose_isomerase_N/cen_sf"/>
</dbReference>
<dbReference type="InterPro" id="IPR003762">
    <property type="entry name" value="Lara_isomerase"/>
</dbReference>
<dbReference type="NCBIfam" id="NF002795">
    <property type="entry name" value="PRK02929.1"/>
    <property type="match status" value="1"/>
</dbReference>
<dbReference type="PANTHER" id="PTHR38464">
    <property type="entry name" value="L-ARABINOSE ISOMERASE"/>
    <property type="match status" value="1"/>
</dbReference>
<dbReference type="PANTHER" id="PTHR38464:SF1">
    <property type="entry name" value="L-ARABINOSE ISOMERASE"/>
    <property type="match status" value="1"/>
</dbReference>
<dbReference type="Pfam" id="PF24856">
    <property type="entry name" value="AraA_central"/>
    <property type="match status" value="1"/>
</dbReference>
<dbReference type="Pfam" id="PF02610">
    <property type="entry name" value="AraA_N"/>
    <property type="match status" value="1"/>
</dbReference>
<dbReference type="Pfam" id="PF11762">
    <property type="entry name" value="Arabinose_Iso_C"/>
    <property type="match status" value="1"/>
</dbReference>
<dbReference type="PIRSF" id="PIRSF001478">
    <property type="entry name" value="L-ara_isomerase"/>
    <property type="match status" value="1"/>
</dbReference>
<dbReference type="SUPFAM" id="SSF50443">
    <property type="entry name" value="FucI/AraA C-terminal domain-like"/>
    <property type="match status" value="1"/>
</dbReference>
<dbReference type="SUPFAM" id="SSF53743">
    <property type="entry name" value="FucI/AraA N-terminal and middle domains"/>
    <property type="match status" value="1"/>
</dbReference>
<protein>
    <recommendedName>
        <fullName evidence="1">L-arabinose isomerase</fullName>
        <ecNumber evidence="1">5.3.1.4</ecNumber>
    </recommendedName>
</protein>
<feature type="chain" id="PRO_1000127605" description="L-arabinose isomerase">
    <location>
        <begin position="1"/>
        <end position="500"/>
    </location>
</feature>
<feature type="binding site" evidence="1">
    <location>
        <position position="306"/>
    </location>
    <ligand>
        <name>Mn(2+)</name>
        <dbReference type="ChEBI" id="CHEBI:29035"/>
    </ligand>
</feature>
<feature type="binding site" evidence="1">
    <location>
        <position position="333"/>
    </location>
    <ligand>
        <name>Mn(2+)</name>
        <dbReference type="ChEBI" id="CHEBI:29035"/>
    </ligand>
</feature>
<feature type="binding site" evidence="1">
    <location>
        <position position="350"/>
    </location>
    <ligand>
        <name>Mn(2+)</name>
        <dbReference type="ChEBI" id="CHEBI:29035"/>
    </ligand>
</feature>
<feature type="binding site" evidence="1">
    <location>
        <position position="450"/>
    </location>
    <ligand>
        <name>Mn(2+)</name>
        <dbReference type="ChEBI" id="CHEBI:29035"/>
    </ligand>
</feature>
<reference key="1">
    <citation type="journal article" date="2008" name="J. Bacteriol.">
        <title>Insights into the environmental resistance gene pool from the genome sequence of the multidrug-resistant environmental isolate Escherichia coli SMS-3-5.</title>
        <authorList>
            <person name="Fricke W.F."/>
            <person name="Wright M.S."/>
            <person name="Lindell A.H."/>
            <person name="Harkins D.M."/>
            <person name="Baker-Austin C."/>
            <person name="Ravel J."/>
            <person name="Stepanauskas R."/>
        </authorList>
    </citation>
    <scope>NUCLEOTIDE SEQUENCE [LARGE SCALE GENOMIC DNA]</scope>
    <source>
        <strain>SMS-3-5 / SECEC</strain>
    </source>
</reference>
<name>ARAA_ECOSM</name>